<feature type="chain" id="PRO_1000115098" description="Large ribosomal subunit protein bL33">
    <location>
        <begin position="1"/>
        <end position="55"/>
    </location>
</feature>
<reference key="1">
    <citation type="journal article" date="2003" name="Nat. Genet.">
        <title>Comparative analysis of the genome sequences of Bordetella pertussis, Bordetella parapertussis and Bordetella bronchiseptica.</title>
        <authorList>
            <person name="Parkhill J."/>
            <person name="Sebaihia M."/>
            <person name="Preston A."/>
            <person name="Murphy L.D."/>
            <person name="Thomson N.R."/>
            <person name="Harris D.E."/>
            <person name="Holden M.T.G."/>
            <person name="Churcher C.M."/>
            <person name="Bentley S.D."/>
            <person name="Mungall K.L."/>
            <person name="Cerdeno-Tarraga A.-M."/>
            <person name="Temple L."/>
            <person name="James K.D."/>
            <person name="Harris B."/>
            <person name="Quail M.A."/>
            <person name="Achtman M."/>
            <person name="Atkin R."/>
            <person name="Baker S."/>
            <person name="Basham D."/>
            <person name="Bason N."/>
            <person name="Cherevach I."/>
            <person name="Chillingworth T."/>
            <person name="Collins M."/>
            <person name="Cronin A."/>
            <person name="Davis P."/>
            <person name="Doggett J."/>
            <person name="Feltwell T."/>
            <person name="Goble A."/>
            <person name="Hamlin N."/>
            <person name="Hauser H."/>
            <person name="Holroyd S."/>
            <person name="Jagels K."/>
            <person name="Leather S."/>
            <person name="Moule S."/>
            <person name="Norberczak H."/>
            <person name="O'Neil S."/>
            <person name="Ormond D."/>
            <person name="Price C."/>
            <person name="Rabbinowitsch E."/>
            <person name="Rutter S."/>
            <person name="Sanders M."/>
            <person name="Saunders D."/>
            <person name="Seeger K."/>
            <person name="Sharp S."/>
            <person name="Simmonds M."/>
            <person name="Skelton J."/>
            <person name="Squares R."/>
            <person name="Squares S."/>
            <person name="Stevens K."/>
            <person name="Unwin L."/>
            <person name="Whitehead S."/>
            <person name="Barrell B.G."/>
            <person name="Maskell D.J."/>
        </authorList>
    </citation>
    <scope>NUCLEOTIDE SEQUENCE [LARGE SCALE GENOMIC DNA]</scope>
    <source>
        <strain>12822 / ATCC BAA-587 / NCTC 13253</strain>
    </source>
</reference>
<proteinExistence type="inferred from homology"/>
<comment type="similarity">
    <text evidence="1">Belongs to the bacterial ribosomal protein bL33 family.</text>
</comment>
<name>RL33_BORPA</name>
<protein>
    <recommendedName>
        <fullName evidence="1">Large ribosomal subunit protein bL33</fullName>
    </recommendedName>
    <alternativeName>
        <fullName evidence="2">50S ribosomal protein L33</fullName>
    </alternativeName>
</protein>
<evidence type="ECO:0000255" key="1">
    <source>
        <dbReference type="HAMAP-Rule" id="MF_00294"/>
    </source>
</evidence>
<evidence type="ECO:0000305" key="2"/>
<keyword id="KW-0687">Ribonucleoprotein</keyword>
<keyword id="KW-0689">Ribosomal protein</keyword>
<organism>
    <name type="scientific">Bordetella parapertussis (strain 12822 / ATCC BAA-587 / NCTC 13253)</name>
    <dbReference type="NCBI Taxonomy" id="257311"/>
    <lineage>
        <taxon>Bacteria</taxon>
        <taxon>Pseudomonadati</taxon>
        <taxon>Pseudomonadota</taxon>
        <taxon>Betaproteobacteria</taxon>
        <taxon>Burkholderiales</taxon>
        <taxon>Alcaligenaceae</taxon>
        <taxon>Bordetella</taxon>
    </lineage>
</organism>
<dbReference type="EMBL" id="BX640428">
    <property type="protein sequence ID" value="CAE37037.1"/>
    <property type="molecule type" value="Genomic_DNA"/>
</dbReference>
<dbReference type="RefSeq" id="WP_003810296.1">
    <property type="nucleotide sequence ID" value="NC_002928.3"/>
</dbReference>
<dbReference type="SMR" id="Q7W9M0"/>
<dbReference type="GeneID" id="94353576"/>
<dbReference type="KEGG" id="bpa:BPP1736"/>
<dbReference type="HOGENOM" id="CLU_190949_1_1_4"/>
<dbReference type="Proteomes" id="UP000001421">
    <property type="component" value="Chromosome"/>
</dbReference>
<dbReference type="GO" id="GO:0022625">
    <property type="term" value="C:cytosolic large ribosomal subunit"/>
    <property type="evidence" value="ECO:0007669"/>
    <property type="project" value="TreeGrafter"/>
</dbReference>
<dbReference type="GO" id="GO:0003735">
    <property type="term" value="F:structural constituent of ribosome"/>
    <property type="evidence" value="ECO:0007669"/>
    <property type="project" value="InterPro"/>
</dbReference>
<dbReference type="GO" id="GO:0006412">
    <property type="term" value="P:translation"/>
    <property type="evidence" value="ECO:0007669"/>
    <property type="project" value="UniProtKB-UniRule"/>
</dbReference>
<dbReference type="FunFam" id="2.20.28.120:FF:000001">
    <property type="entry name" value="50S ribosomal protein L33"/>
    <property type="match status" value="1"/>
</dbReference>
<dbReference type="Gene3D" id="2.20.28.120">
    <property type="entry name" value="Ribosomal protein L33"/>
    <property type="match status" value="1"/>
</dbReference>
<dbReference type="HAMAP" id="MF_00294">
    <property type="entry name" value="Ribosomal_bL33"/>
    <property type="match status" value="1"/>
</dbReference>
<dbReference type="InterPro" id="IPR001705">
    <property type="entry name" value="Ribosomal_bL33"/>
</dbReference>
<dbReference type="InterPro" id="IPR038584">
    <property type="entry name" value="Ribosomal_bL33_sf"/>
</dbReference>
<dbReference type="InterPro" id="IPR011332">
    <property type="entry name" value="Ribosomal_zn-bd"/>
</dbReference>
<dbReference type="NCBIfam" id="NF001860">
    <property type="entry name" value="PRK00595.1"/>
    <property type="match status" value="1"/>
</dbReference>
<dbReference type="NCBIfam" id="TIGR01023">
    <property type="entry name" value="rpmG_bact"/>
    <property type="match status" value="1"/>
</dbReference>
<dbReference type="PANTHER" id="PTHR15238">
    <property type="entry name" value="54S RIBOSOMAL PROTEIN L39, MITOCHONDRIAL"/>
    <property type="match status" value="1"/>
</dbReference>
<dbReference type="PANTHER" id="PTHR15238:SF1">
    <property type="entry name" value="LARGE RIBOSOMAL SUBUNIT PROTEIN BL33M"/>
    <property type="match status" value="1"/>
</dbReference>
<dbReference type="Pfam" id="PF00471">
    <property type="entry name" value="Ribosomal_L33"/>
    <property type="match status" value="1"/>
</dbReference>
<dbReference type="SUPFAM" id="SSF57829">
    <property type="entry name" value="Zn-binding ribosomal proteins"/>
    <property type="match status" value="1"/>
</dbReference>
<accession>Q7W9M0</accession>
<sequence length="55" mass="6438">MAKGIREKIKLESTAGTGHFYTTTKNKRNMPEKMLIKKFDPVARKHVDYKETKLK</sequence>
<gene>
    <name evidence="1" type="primary">rpmG</name>
    <name type="ordered locus">BPP1736</name>
</gene>